<keyword id="KW-0007">Acetylation</keyword>
<keyword id="KW-0249">Electron transport</keyword>
<keyword id="KW-0472">Membrane</keyword>
<keyword id="KW-0496">Mitochondrion</keyword>
<keyword id="KW-0999">Mitochondrion inner membrane</keyword>
<keyword id="KW-0597">Phosphoprotein</keyword>
<keyword id="KW-1185">Reference proteome</keyword>
<keyword id="KW-0679">Respiratory chain</keyword>
<keyword id="KW-0812">Transmembrane</keyword>
<keyword id="KW-1133">Transmembrane helix</keyword>
<keyword id="KW-0813">Transport</keyword>
<reference key="1">
    <citation type="submission" date="2005-06" db="EMBL/GenBank/DDBJ databases">
        <title>DNA sequences of macaque genes expressed in brain or testis and its evolutionary implications.</title>
        <authorList>
            <consortium name="International consortium for macaque cDNA sequencing and analysis"/>
        </authorList>
    </citation>
    <scope>NUCLEOTIDE SEQUENCE [LARGE SCALE MRNA]</scope>
    <source>
        <tissue>Brain cortex</tissue>
    </source>
</reference>
<gene>
    <name type="primary">NDUFA4</name>
    <name type="ORF">QccE-19919</name>
</gene>
<name>NDUA4_MACFA</name>
<accession>Q4R542</accession>
<organism>
    <name type="scientific">Macaca fascicularis</name>
    <name type="common">Crab-eating macaque</name>
    <name type="synonym">Cynomolgus monkey</name>
    <dbReference type="NCBI Taxonomy" id="9541"/>
    <lineage>
        <taxon>Eukaryota</taxon>
        <taxon>Metazoa</taxon>
        <taxon>Chordata</taxon>
        <taxon>Craniata</taxon>
        <taxon>Vertebrata</taxon>
        <taxon>Euteleostomi</taxon>
        <taxon>Mammalia</taxon>
        <taxon>Eutheria</taxon>
        <taxon>Euarchontoglires</taxon>
        <taxon>Primates</taxon>
        <taxon>Haplorrhini</taxon>
        <taxon>Catarrhini</taxon>
        <taxon>Cercopithecidae</taxon>
        <taxon>Cercopithecinae</taxon>
        <taxon>Macaca</taxon>
    </lineage>
</organism>
<comment type="function">
    <text evidence="1">Component of the cytochrome c oxidase, the last enzyme in the mitochondrial electron transport chain which drives oxidative phosphorylation. The respiratory chain contains 3 multisubunit complexes succinate dehydrogenase (complex II, CII), ubiquinol-cytochrome c oxidoreductase (cytochrome b-c1 complex, complex III, CIII) and cytochrome c oxidase (complex IV, CIV), that cooperate to transfer electrons derived from NADH and succinate to molecular oxygen, creating an electrochemical gradient over the inner membrane that drives transmembrane transport and the ATP synthase. Cytochrome c oxidase is the component of the respiratory chain that catalyzes the reduction of oxygen to water. Electrons originating from reduced cytochrome c in the intermembrane space (IMS) are transferred via the dinuclear copper A center (CU(A)) of subunit 2 and heme A of subunit 1 to the active site in subunit 1, a binuclear center (BNC) formed by heme A3 and copper B (CU(B)). The BNC reduces molecular oxygen to 2 water molecules unsing 4 electrons from cytochrome c in the IMS and 4 protons from the mitochondrial matrix. NDUFA4 is required for complex IV maintenance.</text>
</comment>
<comment type="subunit">
    <text evidence="1 2">Component of the cytochrome c oxidase (complex IV, CIV), a multisubunit enzyme composed of 14 subunits. The complex is composed of a catalytic core of 3 subunits MT-CO1, MT-CO2 and MT-CO3, encoded in the mitochondrial DNA, and 11 supernumerary subunits COX4I, COX5A, COX5B, COX6A, COX6B, COX6C, COX7A, COX7B, COX7C, COX8 and NDUFA4, which are encoded in the nuclear genome. The complex exists as a monomer or a dimer and forms supercomplexes (SCs) in the inner mitochondrial membrane with NADH-ubiquinone oxidoreductase (complex I, CI) and ubiquinol-cytochrome c oxidoreductase (cytochrome b-c1 complex, complex III, CIII), resulting in different assemblies (supercomplex SCI(1)III(2)IV(1) and megacomplex MCI(2)III(2)IV(2)) (By similarity). Interacts with RAB5IF (By similarity). Interacts with FLVCR2; this interaction occurs in the absence of heme and is disrupted upon heme binding.</text>
</comment>
<comment type="subcellular location">
    <subcellularLocation>
        <location evidence="1">Mitochondrion inner membrane</location>
        <topology evidence="1">Single-pass membrane protein</topology>
    </subcellularLocation>
</comment>
<comment type="similarity">
    <text evidence="3">Belongs to the complex IV NDUFA4 subunit family.</text>
</comment>
<feature type="chain" id="PRO_0000245769" description="Cytochrome c oxidase subunit NDUFA4">
    <location>
        <begin position="1"/>
        <end position="81"/>
    </location>
</feature>
<feature type="topological domain" description="Mitochondrial matrix" evidence="1">
    <location>
        <begin position="1"/>
        <end position="14"/>
    </location>
</feature>
<feature type="transmembrane region" description="Helical" evidence="1">
    <location>
        <begin position="15"/>
        <end position="37"/>
    </location>
</feature>
<feature type="topological domain" description="Mitochondrial intermembrane" evidence="1">
    <location>
        <begin position="38"/>
        <end position="81"/>
    </location>
</feature>
<feature type="modified residue" description="N6-acetyllysine" evidence="2">
    <location>
        <position position="10"/>
    </location>
</feature>
<feature type="modified residue" description="Phosphoserine" evidence="1">
    <location>
        <position position="66"/>
    </location>
</feature>
<evidence type="ECO:0000250" key="1">
    <source>
        <dbReference type="UniProtKB" id="O00483"/>
    </source>
</evidence>
<evidence type="ECO:0000250" key="2">
    <source>
        <dbReference type="UniProtKB" id="Q62425"/>
    </source>
</evidence>
<evidence type="ECO:0000305" key="3"/>
<sequence length="81" mass="9365">MLRHILGLAKKHPSLIPLFVFLGTGATGATLYLLRLALFSPDVCWDRNNPEPWNKLGPNDQYKFYSVNVDYDKLKKERPDF</sequence>
<dbReference type="EMBL" id="AB169702">
    <property type="protein sequence ID" value="BAE01783.1"/>
    <property type="molecule type" value="mRNA"/>
</dbReference>
<dbReference type="RefSeq" id="XP_005550168.1">
    <property type="nucleotide sequence ID" value="XM_005550111.4"/>
</dbReference>
<dbReference type="RefSeq" id="XP_015306099.1">
    <property type="nucleotide sequence ID" value="XM_015450613.1"/>
</dbReference>
<dbReference type="SMR" id="Q4R542"/>
<dbReference type="STRING" id="9541.ENSMFAP00000011432"/>
<dbReference type="Ensembl" id="ENSMFAT00000031163.2">
    <property type="protein sequence ID" value="ENSMFAP00000023030.1"/>
    <property type="gene ID" value="ENSMFAG00000043193.2"/>
</dbReference>
<dbReference type="GeneID" id="101925169"/>
<dbReference type="KEGG" id="mcf:101925169"/>
<dbReference type="CTD" id="4697"/>
<dbReference type="VEuPathDB" id="HostDB:ENSMFAG00000015919"/>
<dbReference type="VEuPathDB" id="HostDB:ENSMFAG00000043193"/>
<dbReference type="eggNOG" id="ENOG502S65P">
    <property type="taxonomic scope" value="Eukaryota"/>
</dbReference>
<dbReference type="GeneTree" id="ENSGT00940000154268"/>
<dbReference type="OMA" id="WNEYTEK"/>
<dbReference type="OrthoDB" id="1359at314294"/>
<dbReference type="Proteomes" id="UP000233100">
    <property type="component" value="Chromosome 3"/>
</dbReference>
<dbReference type="Bgee" id="ENSMFAG00000043193">
    <property type="expression patterns" value="Expressed in heart and 13 other cell types or tissues"/>
</dbReference>
<dbReference type="GO" id="GO:0005743">
    <property type="term" value="C:mitochondrial inner membrane"/>
    <property type="evidence" value="ECO:0007669"/>
    <property type="project" value="UniProtKB-SubCell"/>
</dbReference>
<dbReference type="GO" id="GO:0045277">
    <property type="term" value="C:respiratory chain complex IV"/>
    <property type="evidence" value="ECO:0000250"/>
    <property type="project" value="UniProtKB"/>
</dbReference>
<dbReference type="GO" id="GO:0044877">
    <property type="term" value="F:protein-containing complex binding"/>
    <property type="evidence" value="ECO:0007669"/>
    <property type="project" value="Ensembl"/>
</dbReference>
<dbReference type="InterPro" id="IPR010530">
    <property type="entry name" value="B12D"/>
</dbReference>
<dbReference type="PANTHER" id="PTHR14256:SF4">
    <property type="entry name" value="CYTOCHROME C OXIDASE SUBUNIT NDUFA4"/>
    <property type="match status" value="1"/>
</dbReference>
<dbReference type="PANTHER" id="PTHR14256">
    <property type="entry name" value="NADH-UBIQUINONE OXIDOREDUCTASE MLRQ SUBUNIT"/>
    <property type="match status" value="1"/>
</dbReference>
<dbReference type="Pfam" id="PF06522">
    <property type="entry name" value="B12D"/>
    <property type="match status" value="1"/>
</dbReference>
<proteinExistence type="inferred from homology"/>
<protein>
    <recommendedName>
        <fullName>Cytochrome c oxidase subunit NDUFA4</fullName>
    </recommendedName>
</protein>